<accession>B8EBI6</accession>
<comment type="function">
    <text evidence="1">Binds to the 23S rRNA.</text>
</comment>
<comment type="subunit">
    <text evidence="1">Part of the 50S ribosomal subunit.</text>
</comment>
<comment type="similarity">
    <text evidence="1">Belongs to the universal ribosomal protein uL15 family.</text>
</comment>
<reference key="1">
    <citation type="submission" date="2008-12" db="EMBL/GenBank/DDBJ databases">
        <title>Complete sequence of chromosome of Shewanella baltica OS223.</title>
        <authorList>
            <consortium name="US DOE Joint Genome Institute"/>
            <person name="Lucas S."/>
            <person name="Copeland A."/>
            <person name="Lapidus A."/>
            <person name="Glavina del Rio T."/>
            <person name="Dalin E."/>
            <person name="Tice H."/>
            <person name="Bruce D."/>
            <person name="Goodwin L."/>
            <person name="Pitluck S."/>
            <person name="Chertkov O."/>
            <person name="Meincke L."/>
            <person name="Brettin T."/>
            <person name="Detter J.C."/>
            <person name="Han C."/>
            <person name="Kuske C.R."/>
            <person name="Larimer F."/>
            <person name="Land M."/>
            <person name="Hauser L."/>
            <person name="Kyrpides N."/>
            <person name="Ovchinnikova G."/>
            <person name="Brettar I."/>
            <person name="Rodrigues J."/>
            <person name="Konstantinidis K."/>
            <person name="Tiedje J."/>
        </authorList>
    </citation>
    <scope>NUCLEOTIDE SEQUENCE [LARGE SCALE GENOMIC DNA]</scope>
    <source>
        <strain>OS223</strain>
    </source>
</reference>
<protein>
    <recommendedName>
        <fullName evidence="1">Large ribosomal subunit protein uL15</fullName>
    </recommendedName>
    <alternativeName>
        <fullName evidence="3">50S ribosomal protein L15</fullName>
    </alternativeName>
</protein>
<gene>
    <name evidence="1" type="primary">rplO</name>
    <name type="ordered locus">Sbal223_4037</name>
</gene>
<sequence length="144" mass="15097">MRLNTLSPAAGSKHAPKRVGRGMGSGLGKTAGRGHKGQKSRSGGGVRPGFEGGQMPLKIRLPKFGFTSRRAMVTAEVRVLELAKVNGDVIDLNALKDANVITRNIQFAKIVLSGTIERPVTVKGLKVTKGARAAIEAAGGKIEE</sequence>
<evidence type="ECO:0000255" key="1">
    <source>
        <dbReference type="HAMAP-Rule" id="MF_01341"/>
    </source>
</evidence>
<evidence type="ECO:0000256" key="2">
    <source>
        <dbReference type="SAM" id="MobiDB-lite"/>
    </source>
</evidence>
<evidence type="ECO:0000305" key="3"/>
<proteinExistence type="inferred from homology"/>
<dbReference type="EMBL" id="CP001252">
    <property type="protein sequence ID" value="ACK48510.1"/>
    <property type="molecule type" value="Genomic_DNA"/>
</dbReference>
<dbReference type="RefSeq" id="WP_006083581.1">
    <property type="nucleotide sequence ID" value="NC_011663.1"/>
</dbReference>
<dbReference type="SMR" id="B8EBI6"/>
<dbReference type="GeneID" id="67441779"/>
<dbReference type="KEGG" id="sbp:Sbal223_4037"/>
<dbReference type="HOGENOM" id="CLU_055188_4_2_6"/>
<dbReference type="Proteomes" id="UP000002507">
    <property type="component" value="Chromosome"/>
</dbReference>
<dbReference type="GO" id="GO:0022625">
    <property type="term" value="C:cytosolic large ribosomal subunit"/>
    <property type="evidence" value="ECO:0007669"/>
    <property type="project" value="TreeGrafter"/>
</dbReference>
<dbReference type="GO" id="GO:0019843">
    <property type="term" value="F:rRNA binding"/>
    <property type="evidence" value="ECO:0007669"/>
    <property type="project" value="UniProtKB-UniRule"/>
</dbReference>
<dbReference type="GO" id="GO:0003735">
    <property type="term" value="F:structural constituent of ribosome"/>
    <property type="evidence" value="ECO:0007669"/>
    <property type="project" value="InterPro"/>
</dbReference>
<dbReference type="GO" id="GO:0006412">
    <property type="term" value="P:translation"/>
    <property type="evidence" value="ECO:0007669"/>
    <property type="project" value="UniProtKB-UniRule"/>
</dbReference>
<dbReference type="FunFam" id="3.100.10.10:FF:000003">
    <property type="entry name" value="50S ribosomal protein L15"/>
    <property type="match status" value="1"/>
</dbReference>
<dbReference type="Gene3D" id="3.100.10.10">
    <property type="match status" value="1"/>
</dbReference>
<dbReference type="HAMAP" id="MF_01341">
    <property type="entry name" value="Ribosomal_uL15"/>
    <property type="match status" value="1"/>
</dbReference>
<dbReference type="InterPro" id="IPR030878">
    <property type="entry name" value="Ribosomal_uL15"/>
</dbReference>
<dbReference type="InterPro" id="IPR021131">
    <property type="entry name" value="Ribosomal_uL15/eL18"/>
</dbReference>
<dbReference type="InterPro" id="IPR036227">
    <property type="entry name" value="Ribosomal_uL15/eL18_sf"/>
</dbReference>
<dbReference type="InterPro" id="IPR005749">
    <property type="entry name" value="Ribosomal_uL15_bac-type"/>
</dbReference>
<dbReference type="InterPro" id="IPR001196">
    <property type="entry name" value="Ribosomal_uL15_CS"/>
</dbReference>
<dbReference type="NCBIfam" id="TIGR01071">
    <property type="entry name" value="rplO_bact"/>
    <property type="match status" value="1"/>
</dbReference>
<dbReference type="PANTHER" id="PTHR12934">
    <property type="entry name" value="50S RIBOSOMAL PROTEIN L15"/>
    <property type="match status" value="1"/>
</dbReference>
<dbReference type="PANTHER" id="PTHR12934:SF11">
    <property type="entry name" value="LARGE RIBOSOMAL SUBUNIT PROTEIN UL15M"/>
    <property type="match status" value="1"/>
</dbReference>
<dbReference type="Pfam" id="PF00828">
    <property type="entry name" value="Ribosomal_L27A"/>
    <property type="match status" value="1"/>
</dbReference>
<dbReference type="SUPFAM" id="SSF52080">
    <property type="entry name" value="Ribosomal proteins L15p and L18e"/>
    <property type="match status" value="1"/>
</dbReference>
<dbReference type="PROSITE" id="PS00475">
    <property type="entry name" value="RIBOSOMAL_L15"/>
    <property type="match status" value="1"/>
</dbReference>
<feature type="chain" id="PRO_1000166313" description="Large ribosomal subunit protein uL15">
    <location>
        <begin position="1"/>
        <end position="144"/>
    </location>
</feature>
<feature type="region of interest" description="Disordered" evidence="2">
    <location>
        <begin position="1"/>
        <end position="54"/>
    </location>
</feature>
<feature type="compositionally biased region" description="Gly residues" evidence="2">
    <location>
        <begin position="21"/>
        <end position="31"/>
    </location>
</feature>
<feature type="compositionally biased region" description="Gly residues" evidence="2">
    <location>
        <begin position="42"/>
        <end position="52"/>
    </location>
</feature>
<name>RL15_SHEB2</name>
<keyword id="KW-0687">Ribonucleoprotein</keyword>
<keyword id="KW-0689">Ribosomal protein</keyword>
<keyword id="KW-0694">RNA-binding</keyword>
<keyword id="KW-0699">rRNA-binding</keyword>
<organism>
    <name type="scientific">Shewanella baltica (strain OS223)</name>
    <dbReference type="NCBI Taxonomy" id="407976"/>
    <lineage>
        <taxon>Bacteria</taxon>
        <taxon>Pseudomonadati</taxon>
        <taxon>Pseudomonadota</taxon>
        <taxon>Gammaproteobacteria</taxon>
        <taxon>Alteromonadales</taxon>
        <taxon>Shewanellaceae</taxon>
        <taxon>Shewanella</taxon>
    </lineage>
</organism>